<dbReference type="EC" id="3.5.1.5" evidence="1"/>
<dbReference type="EMBL" id="CP000454">
    <property type="protein sequence ID" value="ABK01643.1"/>
    <property type="molecule type" value="Genomic_DNA"/>
</dbReference>
<dbReference type="RefSeq" id="WP_011690113.1">
    <property type="nucleotide sequence ID" value="NC_008541.1"/>
</dbReference>
<dbReference type="SMR" id="A0JRH3"/>
<dbReference type="STRING" id="290399.Arth_0242"/>
<dbReference type="KEGG" id="art:Arth_0242"/>
<dbReference type="eggNOG" id="COG0832">
    <property type="taxonomic scope" value="Bacteria"/>
</dbReference>
<dbReference type="HOGENOM" id="CLU_129707_1_1_11"/>
<dbReference type="OrthoDB" id="9797217at2"/>
<dbReference type="UniPathway" id="UPA00258">
    <property type="reaction ID" value="UER00370"/>
</dbReference>
<dbReference type="Proteomes" id="UP000000754">
    <property type="component" value="Chromosome"/>
</dbReference>
<dbReference type="GO" id="GO:0035550">
    <property type="term" value="C:urease complex"/>
    <property type="evidence" value="ECO:0007669"/>
    <property type="project" value="InterPro"/>
</dbReference>
<dbReference type="GO" id="GO:0009039">
    <property type="term" value="F:urease activity"/>
    <property type="evidence" value="ECO:0007669"/>
    <property type="project" value="UniProtKB-UniRule"/>
</dbReference>
<dbReference type="GO" id="GO:0043419">
    <property type="term" value="P:urea catabolic process"/>
    <property type="evidence" value="ECO:0007669"/>
    <property type="project" value="UniProtKB-UniRule"/>
</dbReference>
<dbReference type="CDD" id="cd00407">
    <property type="entry name" value="Urease_beta"/>
    <property type="match status" value="1"/>
</dbReference>
<dbReference type="FunFam" id="2.10.150.10:FF:000001">
    <property type="entry name" value="Urease subunit beta"/>
    <property type="match status" value="1"/>
</dbReference>
<dbReference type="Gene3D" id="2.10.150.10">
    <property type="entry name" value="Urease, beta subunit"/>
    <property type="match status" value="1"/>
</dbReference>
<dbReference type="HAMAP" id="MF_01954">
    <property type="entry name" value="Urease_beta"/>
    <property type="match status" value="1"/>
</dbReference>
<dbReference type="InterPro" id="IPR002019">
    <property type="entry name" value="Urease_beta-like"/>
</dbReference>
<dbReference type="InterPro" id="IPR036461">
    <property type="entry name" value="Urease_betasu_sf"/>
</dbReference>
<dbReference type="InterPro" id="IPR050069">
    <property type="entry name" value="Urease_subunit"/>
</dbReference>
<dbReference type="NCBIfam" id="NF009682">
    <property type="entry name" value="PRK13203.1"/>
    <property type="match status" value="1"/>
</dbReference>
<dbReference type="NCBIfam" id="TIGR00192">
    <property type="entry name" value="urease_beta"/>
    <property type="match status" value="1"/>
</dbReference>
<dbReference type="PANTHER" id="PTHR33569">
    <property type="entry name" value="UREASE"/>
    <property type="match status" value="1"/>
</dbReference>
<dbReference type="PANTHER" id="PTHR33569:SF1">
    <property type="entry name" value="UREASE"/>
    <property type="match status" value="1"/>
</dbReference>
<dbReference type="Pfam" id="PF00699">
    <property type="entry name" value="Urease_beta"/>
    <property type="match status" value="1"/>
</dbReference>
<dbReference type="SUPFAM" id="SSF51278">
    <property type="entry name" value="Urease, beta-subunit"/>
    <property type="match status" value="1"/>
</dbReference>
<proteinExistence type="inferred from homology"/>
<keyword id="KW-0963">Cytoplasm</keyword>
<keyword id="KW-0378">Hydrolase</keyword>
<keyword id="KW-1185">Reference proteome</keyword>
<protein>
    <recommendedName>
        <fullName evidence="1">Urease subunit beta</fullName>
        <ecNumber evidence="1">3.5.1.5</ecNumber>
    </recommendedName>
    <alternativeName>
        <fullName evidence="1">Urea amidohydrolase subunit beta</fullName>
    </alternativeName>
</protein>
<feature type="chain" id="PRO_1000070714" description="Urease subunit beta">
    <location>
        <begin position="1"/>
        <end position="115"/>
    </location>
</feature>
<reference key="1">
    <citation type="journal article" date="2013" name="Stand. Genomic Sci.">
        <title>Complete genome sequence of Arthrobacter sp. strain FB24.</title>
        <authorList>
            <person name="Nakatsu C.H."/>
            <person name="Barabote R."/>
            <person name="Thompson S."/>
            <person name="Bruce D."/>
            <person name="Detter C."/>
            <person name="Brettin T."/>
            <person name="Han C."/>
            <person name="Beasley F."/>
            <person name="Chen W."/>
            <person name="Konopka A."/>
            <person name="Xie G."/>
        </authorList>
    </citation>
    <scope>NUCLEOTIDE SEQUENCE [LARGE SCALE GENOMIC DNA]</scope>
    <source>
        <strain>FB24</strain>
    </source>
</reference>
<accession>A0JRH3</accession>
<name>URE2_ARTS2</name>
<comment type="catalytic activity">
    <reaction evidence="1">
        <text>urea + 2 H2O + H(+) = hydrogencarbonate + 2 NH4(+)</text>
        <dbReference type="Rhea" id="RHEA:20557"/>
        <dbReference type="ChEBI" id="CHEBI:15377"/>
        <dbReference type="ChEBI" id="CHEBI:15378"/>
        <dbReference type="ChEBI" id="CHEBI:16199"/>
        <dbReference type="ChEBI" id="CHEBI:17544"/>
        <dbReference type="ChEBI" id="CHEBI:28938"/>
        <dbReference type="EC" id="3.5.1.5"/>
    </reaction>
</comment>
<comment type="pathway">
    <text evidence="1">Nitrogen metabolism; urea degradation; CO(2) and NH(3) from urea (urease route): step 1/1.</text>
</comment>
<comment type="subunit">
    <text evidence="1">Heterotrimer of UreA (gamma), UreB (beta) and UreC (alpha) subunits. Three heterotrimers associate to form the active enzyme.</text>
</comment>
<comment type="subcellular location">
    <subcellularLocation>
        <location evidence="1">Cytoplasm</location>
    </subcellularLocation>
</comment>
<comment type="similarity">
    <text evidence="1">Belongs to the urease beta subunit family.</text>
</comment>
<gene>
    <name evidence="1" type="primary">ureB</name>
    <name type="ordered locus">Arth_0242</name>
</gene>
<organism>
    <name type="scientific">Arthrobacter sp. (strain FB24)</name>
    <dbReference type="NCBI Taxonomy" id="290399"/>
    <lineage>
        <taxon>Bacteria</taxon>
        <taxon>Bacillati</taxon>
        <taxon>Actinomycetota</taxon>
        <taxon>Actinomycetes</taxon>
        <taxon>Micrococcales</taxon>
        <taxon>Micrococcaceae</taxon>
        <taxon>Arthrobacter</taxon>
    </lineage>
</organism>
<evidence type="ECO:0000255" key="1">
    <source>
        <dbReference type="HAMAP-Rule" id="MF_01954"/>
    </source>
</evidence>
<sequence length="115" mass="12068">MIPGEYVLGSTPVVINAGRDAIDVVVVNTGDRPVQVGSHYHFAEANAALAFDRAAAYGRRLDIPAGTAARFEPGDSKTVRLIELAGSREVYGLSNAVNGTLDAGNARQEAKTEAK</sequence>